<feature type="chain" id="PRO_0000191840" description="Myohemerythrin">
    <location>
        <begin position="1"/>
        <end position="120"/>
    </location>
</feature>
<feature type="binding site" evidence="2">
    <location>
        <position position="26"/>
    </location>
    <ligand>
        <name>Fe cation</name>
        <dbReference type="ChEBI" id="CHEBI:24875"/>
        <label>1</label>
    </ligand>
</feature>
<feature type="binding site" evidence="2">
    <location>
        <position position="56"/>
    </location>
    <ligand>
        <name>Fe cation</name>
        <dbReference type="ChEBI" id="CHEBI:24875"/>
        <label>1</label>
    </ligand>
</feature>
<feature type="binding site" evidence="2">
    <location>
        <position position="60"/>
    </location>
    <ligand>
        <name>Fe cation</name>
        <dbReference type="ChEBI" id="CHEBI:24875"/>
        <label>1</label>
    </ligand>
</feature>
<feature type="binding site" evidence="2">
    <location>
        <position position="60"/>
    </location>
    <ligand>
        <name>Fe cation</name>
        <dbReference type="ChEBI" id="CHEBI:24875"/>
        <label>2</label>
    </ligand>
</feature>
<feature type="binding site" evidence="2">
    <location>
        <position position="75"/>
    </location>
    <ligand>
        <name>Fe cation</name>
        <dbReference type="ChEBI" id="CHEBI:24875"/>
        <label>2</label>
    </ligand>
</feature>
<feature type="binding site" evidence="2">
    <location>
        <position position="79"/>
    </location>
    <ligand>
        <name>Fe cation</name>
        <dbReference type="ChEBI" id="CHEBI:24875"/>
        <label>2</label>
    </ligand>
</feature>
<feature type="binding site" evidence="2">
    <location>
        <position position="108"/>
    </location>
    <ligand>
        <name>Fe cation</name>
        <dbReference type="ChEBI" id="CHEBI:24875"/>
        <label>2</label>
    </ligand>
</feature>
<feature type="binding site" evidence="2">
    <location>
        <position position="113"/>
    </location>
    <ligand>
        <name>Fe cation</name>
        <dbReference type="ChEBI" id="CHEBI:24875"/>
        <label>1</label>
    </ligand>
</feature>
<feature type="binding site" evidence="2">
    <location>
        <position position="113"/>
    </location>
    <ligand>
        <name>Fe cation</name>
        <dbReference type="ChEBI" id="CHEBI:24875"/>
        <label>2</label>
    </ligand>
</feature>
<protein>
    <recommendedName>
        <fullName>Myohemerythrin</fullName>
        <shortName>MHr</shortName>
    </recommendedName>
</protein>
<comment type="function">
    <text evidence="1">Myohemerythrin is an oxygen-binding protein found in the retractor muscles of certain worms. The oxygen-binding site contains two iron atoms (By similarity).</text>
</comment>
<comment type="subunit">
    <text evidence="3">Monomer.</text>
</comment>
<comment type="subcellular location">
    <subcellularLocation>
        <location evidence="3">Cytoplasm</location>
    </subcellularLocation>
</comment>
<comment type="similarity">
    <text evidence="3">Belongs to the hemerythrin family.</text>
</comment>
<proteinExistence type="evidence at transcript level"/>
<name>HEMTM_THETS</name>
<sequence>MVFEIPEPYQWDETFEVFYEKLDEEHKGLFKGIKDLSDSPACSETLEKLVKLIEDHFTDEEEMMKSKSYEDLDSHKKIHSDFVETLKGVKAPVSEENIKMAKEWLVNHIKGTDFKYKGKL</sequence>
<evidence type="ECO:0000250" key="1"/>
<evidence type="ECO:0000250" key="2">
    <source>
        <dbReference type="UniProtKB" id="P02244"/>
    </source>
</evidence>
<evidence type="ECO:0000305" key="3"/>
<accession>Q9GYZ9</accession>
<organism>
    <name type="scientific">Theromyzon tessulatum</name>
    <name type="common">Duck leech</name>
    <dbReference type="NCBI Taxonomy" id="13286"/>
    <lineage>
        <taxon>Eukaryota</taxon>
        <taxon>Metazoa</taxon>
        <taxon>Spiralia</taxon>
        <taxon>Lophotrochozoa</taxon>
        <taxon>Annelida</taxon>
        <taxon>Clitellata</taxon>
        <taxon>Hirudinea</taxon>
        <taxon>Rhynchobdellida</taxon>
        <taxon>Glossiphoniidae</taxon>
        <taxon>Theromyzon</taxon>
    </lineage>
</organism>
<reference key="1">
    <citation type="journal article" date="2001" name="Biochim. Biophys. Acta">
        <title>Cloning and expression analysis of a cDNA that encodes a leech hemerythrin.</title>
        <authorList>
            <person name="Coutte L."/>
            <person name="Slomianny M.-C."/>
            <person name="Malecha J."/>
            <person name="Baert J.-L."/>
        </authorList>
    </citation>
    <scope>NUCLEOTIDE SEQUENCE [MRNA]</scope>
</reference>
<keyword id="KW-0963">Cytoplasm</keyword>
<keyword id="KW-0408">Iron</keyword>
<keyword id="KW-0479">Metal-binding</keyword>
<keyword id="KW-0561">Oxygen transport</keyword>
<keyword id="KW-0813">Transport</keyword>
<dbReference type="EMBL" id="AF279333">
    <property type="protein sequence ID" value="AAG01808.1"/>
    <property type="molecule type" value="mRNA"/>
</dbReference>
<dbReference type="SMR" id="Q9GYZ9"/>
<dbReference type="GO" id="GO:0005737">
    <property type="term" value="C:cytoplasm"/>
    <property type="evidence" value="ECO:0007669"/>
    <property type="project" value="UniProtKB-SubCell"/>
</dbReference>
<dbReference type="GO" id="GO:0005506">
    <property type="term" value="F:iron ion binding"/>
    <property type="evidence" value="ECO:0007669"/>
    <property type="project" value="InterPro"/>
</dbReference>
<dbReference type="GO" id="GO:0005344">
    <property type="term" value="F:oxygen carrier activity"/>
    <property type="evidence" value="ECO:0007669"/>
    <property type="project" value="UniProtKB-KW"/>
</dbReference>
<dbReference type="CDD" id="cd12107">
    <property type="entry name" value="Hemerythrin"/>
    <property type="match status" value="1"/>
</dbReference>
<dbReference type="Gene3D" id="1.20.120.50">
    <property type="entry name" value="Hemerythrin-like"/>
    <property type="match status" value="1"/>
</dbReference>
<dbReference type="InterPro" id="IPR002063">
    <property type="entry name" value="Haemerythrin"/>
</dbReference>
<dbReference type="InterPro" id="IPR016131">
    <property type="entry name" value="Haemerythrin_Fe_BS"/>
</dbReference>
<dbReference type="InterPro" id="IPR050669">
    <property type="entry name" value="Hemerythrin"/>
</dbReference>
<dbReference type="InterPro" id="IPR012312">
    <property type="entry name" value="Hemerythrin-like"/>
</dbReference>
<dbReference type="InterPro" id="IPR035938">
    <property type="entry name" value="Hemerythrin-like_sf"/>
</dbReference>
<dbReference type="InterPro" id="IPR012827">
    <property type="entry name" value="Hemerythrin_metal-bd"/>
</dbReference>
<dbReference type="NCBIfam" id="TIGR02481">
    <property type="entry name" value="hemeryth_dom"/>
    <property type="match status" value="1"/>
</dbReference>
<dbReference type="NCBIfam" id="TIGR00058">
    <property type="entry name" value="Hemerythrin"/>
    <property type="match status" value="1"/>
</dbReference>
<dbReference type="PANTHER" id="PTHR37164">
    <property type="entry name" value="BACTERIOHEMERYTHRIN"/>
    <property type="match status" value="1"/>
</dbReference>
<dbReference type="PANTHER" id="PTHR37164:SF1">
    <property type="entry name" value="BACTERIOHEMERYTHRIN"/>
    <property type="match status" value="1"/>
</dbReference>
<dbReference type="Pfam" id="PF01814">
    <property type="entry name" value="Hemerythrin"/>
    <property type="match status" value="1"/>
</dbReference>
<dbReference type="PIRSF" id="PIRSF002033">
    <property type="entry name" value="Hemerythrin"/>
    <property type="match status" value="1"/>
</dbReference>
<dbReference type="PRINTS" id="PR00186">
    <property type="entry name" value="HEMERYTHRIN"/>
</dbReference>
<dbReference type="SUPFAM" id="SSF47188">
    <property type="entry name" value="Hemerythrin-like"/>
    <property type="match status" value="1"/>
</dbReference>
<dbReference type="PROSITE" id="PS00550">
    <property type="entry name" value="HEMERYTHRINS"/>
    <property type="match status" value="1"/>
</dbReference>